<accession>B7IT85</accession>
<name>KHSE_BACC2</name>
<sequence length="297" mass="32129">MIPLSVRVPASTANVGPGFDSVGIALSLYLDVVVKEKADKWQVIHSFEESIPTDDKNLIVSTACKVCPSISPHIIEVTSNIPLTRGLGSSASAIVAGIEVANQLGDLNLTADQKVQIATNFEGHPDNVAASILGGTVIGALDGKDISVVRIESKELGVISLIPNEELNTDESRSVLPKMFPFHEAVKASAISNVLVAALCQKRWEVVGEMMERDHFHEPYRLELVPLLPSIRKCAKEFGAYGTALSGAGPSIFILTPYEKRQEIAEQLARVFTDMKVCELEIDHKGIIVNKEEHIGL</sequence>
<evidence type="ECO:0000255" key="1">
    <source>
        <dbReference type="HAMAP-Rule" id="MF_00384"/>
    </source>
</evidence>
<proteinExistence type="inferred from homology"/>
<feature type="chain" id="PRO_1000122404" description="Homoserine kinase">
    <location>
        <begin position="1"/>
        <end position="297"/>
    </location>
</feature>
<feature type="binding site" evidence="1">
    <location>
        <begin position="82"/>
        <end position="92"/>
    </location>
    <ligand>
        <name>ATP</name>
        <dbReference type="ChEBI" id="CHEBI:30616"/>
    </ligand>
</feature>
<reference key="1">
    <citation type="submission" date="2008-10" db="EMBL/GenBank/DDBJ databases">
        <title>Genome sequence of Bacillus cereus G9842.</title>
        <authorList>
            <person name="Dodson R.J."/>
            <person name="Durkin A.S."/>
            <person name="Rosovitz M.J."/>
            <person name="Rasko D.A."/>
            <person name="Hoffmaster A."/>
            <person name="Ravel J."/>
            <person name="Sutton G."/>
        </authorList>
    </citation>
    <scope>NUCLEOTIDE SEQUENCE [LARGE SCALE GENOMIC DNA]</scope>
    <source>
        <strain>G9842</strain>
    </source>
</reference>
<comment type="function">
    <text evidence="1">Catalyzes the ATP-dependent phosphorylation of L-homoserine to L-homoserine phosphate.</text>
</comment>
<comment type="catalytic activity">
    <reaction evidence="1">
        <text>L-homoserine + ATP = O-phospho-L-homoserine + ADP + H(+)</text>
        <dbReference type="Rhea" id="RHEA:13985"/>
        <dbReference type="ChEBI" id="CHEBI:15378"/>
        <dbReference type="ChEBI" id="CHEBI:30616"/>
        <dbReference type="ChEBI" id="CHEBI:57476"/>
        <dbReference type="ChEBI" id="CHEBI:57590"/>
        <dbReference type="ChEBI" id="CHEBI:456216"/>
        <dbReference type="EC" id="2.7.1.39"/>
    </reaction>
</comment>
<comment type="pathway">
    <text evidence="1">Amino-acid biosynthesis; L-threonine biosynthesis; L-threonine from L-aspartate: step 4/5.</text>
</comment>
<comment type="subcellular location">
    <subcellularLocation>
        <location evidence="1">Cytoplasm</location>
    </subcellularLocation>
</comment>
<comment type="similarity">
    <text evidence="1">Belongs to the GHMP kinase family. Homoserine kinase subfamily.</text>
</comment>
<gene>
    <name evidence="1" type="primary">thrB</name>
    <name type="ordered locus">BCG9842_B3355</name>
</gene>
<keyword id="KW-0028">Amino-acid biosynthesis</keyword>
<keyword id="KW-0067">ATP-binding</keyword>
<keyword id="KW-0963">Cytoplasm</keyword>
<keyword id="KW-0418">Kinase</keyword>
<keyword id="KW-0547">Nucleotide-binding</keyword>
<keyword id="KW-0791">Threonine biosynthesis</keyword>
<keyword id="KW-0808">Transferase</keyword>
<protein>
    <recommendedName>
        <fullName evidence="1">Homoserine kinase</fullName>
        <shortName evidence="1">HK</shortName>
        <shortName evidence="1">HSK</shortName>
        <ecNumber evidence="1">2.7.1.39</ecNumber>
    </recommendedName>
</protein>
<dbReference type="EC" id="2.7.1.39" evidence="1"/>
<dbReference type="EMBL" id="CP001186">
    <property type="protein sequence ID" value="ACK97772.1"/>
    <property type="molecule type" value="Genomic_DNA"/>
</dbReference>
<dbReference type="RefSeq" id="WP_000612685.1">
    <property type="nucleotide sequence ID" value="NC_011772.1"/>
</dbReference>
<dbReference type="SMR" id="B7IT85"/>
<dbReference type="KEGG" id="bcg:BCG9842_B3355"/>
<dbReference type="HOGENOM" id="CLU_041243_0_0_9"/>
<dbReference type="UniPathway" id="UPA00050">
    <property type="reaction ID" value="UER00064"/>
</dbReference>
<dbReference type="Proteomes" id="UP000006744">
    <property type="component" value="Chromosome"/>
</dbReference>
<dbReference type="GO" id="GO:0005737">
    <property type="term" value="C:cytoplasm"/>
    <property type="evidence" value="ECO:0007669"/>
    <property type="project" value="UniProtKB-SubCell"/>
</dbReference>
<dbReference type="GO" id="GO:0005524">
    <property type="term" value="F:ATP binding"/>
    <property type="evidence" value="ECO:0007669"/>
    <property type="project" value="UniProtKB-UniRule"/>
</dbReference>
<dbReference type="GO" id="GO:0004413">
    <property type="term" value="F:homoserine kinase activity"/>
    <property type="evidence" value="ECO:0007669"/>
    <property type="project" value="UniProtKB-UniRule"/>
</dbReference>
<dbReference type="GO" id="GO:0009088">
    <property type="term" value="P:threonine biosynthetic process"/>
    <property type="evidence" value="ECO:0007669"/>
    <property type="project" value="UniProtKB-UniRule"/>
</dbReference>
<dbReference type="Gene3D" id="3.30.230.10">
    <property type="match status" value="1"/>
</dbReference>
<dbReference type="Gene3D" id="3.30.70.890">
    <property type="entry name" value="GHMP kinase, C-terminal domain"/>
    <property type="match status" value="1"/>
</dbReference>
<dbReference type="HAMAP" id="MF_00384">
    <property type="entry name" value="Homoser_kinase"/>
    <property type="match status" value="1"/>
</dbReference>
<dbReference type="InterPro" id="IPR013750">
    <property type="entry name" value="GHMP_kinase_C_dom"/>
</dbReference>
<dbReference type="InterPro" id="IPR036554">
    <property type="entry name" value="GHMP_kinase_C_sf"/>
</dbReference>
<dbReference type="InterPro" id="IPR006204">
    <property type="entry name" value="GHMP_kinase_N_dom"/>
</dbReference>
<dbReference type="InterPro" id="IPR006203">
    <property type="entry name" value="GHMP_knse_ATP-bd_CS"/>
</dbReference>
<dbReference type="InterPro" id="IPR000870">
    <property type="entry name" value="Homoserine_kinase"/>
</dbReference>
<dbReference type="InterPro" id="IPR020568">
    <property type="entry name" value="Ribosomal_Su5_D2-typ_SF"/>
</dbReference>
<dbReference type="InterPro" id="IPR014721">
    <property type="entry name" value="Ribsml_uS5_D2-typ_fold_subgr"/>
</dbReference>
<dbReference type="NCBIfam" id="TIGR00191">
    <property type="entry name" value="thrB"/>
    <property type="match status" value="1"/>
</dbReference>
<dbReference type="PANTHER" id="PTHR20861:SF1">
    <property type="entry name" value="HOMOSERINE KINASE"/>
    <property type="match status" value="1"/>
</dbReference>
<dbReference type="PANTHER" id="PTHR20861">
    <property type="entry name" value="HOMOSERINE/4-DIPHOSPHOCYTIDYL-2-C-METHYL-D-ERYTHRITOL KINASE"/>
    <property type="match status" value="1"/>
</dbReference>
<dbReference type="Pfam" id="PF08544">
    <property type="entry name" value="GHMP_kinases_C"/>
    <property type="match status" value="1"/>
</dbReference>
<dbReference type="Pfam" id="PF00288">
    <property type="entry name" value="GHMP_kinases_N"/>
    <property type="match status" value="1"/>
</dbReference>
<dbReference type="PIRSF" id="PIRSF000676">
    <property type="entry name" value="Homoser_kin"/>
    <property type="match status" value="1"/>
</dbReference>
<dbReference type="PRINTS" id="PR00958">
    <property type="entry name" value="HOMSERKINASE"/>
</dbReference>
<dbReference type="SUPFAM" id="SSF55060">
    <property type="entry name" value="GHMP Kinase, C-terminal domain"/>
    <property type="match status" value="1"/>
</dbReference>
<dbReference type="SUPFAM" id="SSF54211">
    <property type="entry name" value="Ribosomal protein S5 domain 2-like"/>
    <property type="match status" value="1"/>
</dbReference>
<dbReference type="PROSITE" id="PS00627">
    <property type="entry name" value="GHMP_KINASES_ATP"/>
    <property type="match status" value="1"/>
</dbReference>
<organism>
    <name type="scientific">Bacillus cereus (strain G9842)</name>
    <dbReference type="NCBI Taxonomy" id="405531"/>
    <lineage>
        <taxon>Bacteria</taxon>
        <taxon>Bacillati</taxon>
        <taxon>Bacillota</taxon>
        <taxon>Bacilli</taxon>
        <taxon>Bacillales</taxon>
        <taxon>Bacillaceae</taxon>
        <taxon>Bacillus</taxon>
        <taxon>Bacillus cereus group</taxon>
    </lineage>
</organism>